<reference key="1">
    <citation type="journal article" date="1995" name="Gene">
        <title>Structure and evolution of CyI cytoplasmic actin-encoding genes in the indirect- and direct-developing sea urchins Heliocidaris tuberculata and Heliocidaris erythrogramma.</title>
        <authorList>
            <person name="Hahn J.-H."/>
            <person name="Kissinger J.C."/>
            <person name="Raff R.A."/>
        </authorList>
    </citation>
    <scope>NUCLEOTIDE SEQUENCE [GENOMIC DNA]</scope>
</reference>
<dbReference type="EC" id="3.6.4.-" evidence="2"/>
<dbReference type="EMBL" id="U12272">
    <property type="protein sequence ID" value="AAA96349.1"/>
    <property type="molecule type" value="Genomic_DNA"/>
</dbReference>
<dbReference type="EMBL" id="U09636">
    <property type="protein sequence ID" value="AAA96349.1"/>
    <property type="status" value="JOINED"/>
    <property type="molecule type" value="Genomic_DNA"/>
</dbReference>
<dbReference type="SMR" id="P69003"/>
<dbReference type="GO" id="GO:0005737">
    <property type="term" value="C:cytoplasm"/>
    <property type="evidence" value="ECO:0007669"/>
    <property type="project" value="UniProtKB-KW"/>
</dbReference>
<dbReference type="GO" id="GO:0005856">
    <property type="term" value="C:cytoskeleton"/>
    <property type="evidence" value="ECO:0007669"/>
    <property type="project" value="UniProtKB-SubCell"/>
</dbReference>
<dbReference type="GO" id="GO:0005524">
    <property type="term" value="F:ATP binding"/>
    <property type="evidence" value="ECO:0007669"/>
    <property type="project" value="UniProtKB-KW"/>
</dbReference>
<dbReference type="GO" id="GO:0016787">
    <property type="term" value="F:hydrolase activity"/>
    <property type="evidence" value="ECO:0007669"/>
    <property type="project" value="UniProtKB-KW"/>
</dbReference>
<dbReference type="CDD" id="cd10224">
    <property type="entry name" value="ASKHA_NBD_actin"/>
    <property type="match status" value="1"/>
</dbReference>
<dbReference type="FunFam" id="2.30.36.70:FF:000001">
    <property type="entry name" value="Actin, alpha skeletal muscle"/>
    <property type="match status" value="1"/>
</dbReference>
<dbReference type="FunFam" id="3.30.420.40:FF:000131">
    <property type="entry name" value="Actin, alpha skeletal muscle"/>
    <property type="match status" value="1"/>
</dbReference>
<dbReference type="FunFam" id="3.30.420.40:FF:000291">
    <property type="entry name" value="Actin, alpha skeletal muscle"/>
    <property type="match status" value="1"/>
</dbReference>
<dbReference type="FunFam" id="3.90.640.10:FF:000047">
    <property type="entry name" value="Actin, alpha skeletal muscle"/>
    <property type="match status" value="1"/>
</dbReference>
<dbReference type="FunFam" id="3.30.420.40:FF:000058">
    <property type="entry name" value="Putative actin-related protein 5"/>
    <property type="match status" value="1"/>
</dbReference>
<dbReference type="Gene3D" id="3.30.420.40">
    <property type="match status" value="2"/>
</dbReference>
<dbReference type="Gene3D" id="3.90.640.10">
    <property type="entry name" value="Actin, Chain A, domain 4"/>
    <property type="match status" value="1"/>
</dbReference>
<dbReference type="InterPro" id="IPR004000">
    <property type="entry name" value="Actin"/>
</dbReference>
<dbReference type="InterPro" id="IPR020902">
    <property type="entry name" value="Actin/actin-like_CS"/>
</dbReference>
<dbReference type="InterPro" id="IPR004001">
    <property type="entry name" value="Actin_CS"/>
</dbReference>
<dbReference type="InterPro" id="IPR043129">
    <property type="entry name" value="ATPase_NBD"/>
</dbReference>
<dbReference type="PANTHER" id="PTHR11937">
    <property type="entry name" value="ACTIN"/>
    <property type="match status" value="1"/>
</dbReference>
<dbReference type="Pfam" id="PF00022">
    <property type="entry name" value="Actin"/>
    <property type="match status" value="1"/>
</dbReference>
<dbReference type="PRINTS" id="PR00190">
    <property type="entry name" value="ACTIN"/>
</dbReference>
<dbReference type="SMART" id="SM00268">
    <property type="entry name" value="ACTIN"/>
    <property type="match status" value="1"/>
</dbReference>
<dbReference type="SUPFAM" id="SSF53067">
    <property type="entry name" value="Actin-like ATPase domain"/>
    <property type="match status" value="2"/>
</dbReference>
<dbReference type="PROSITE" id="PS00406">
    <property type="entry name" value="ACTINS_1"/>
    <property type="match status" value="1"/>
</dbReference>
<dbReference type="PROSITE" id="PS00432">
    <property type="entry name" value="ACTINS_2"/>
    <property type="match status" value="1"/>
</dbReference>
<dbReference type="PROSITE" id="PS01132">
    <property type="entry name" value="ACTINS_ACT_LIKE"/>
    <property type="match status" value="1"/>
</dbReference>
<comment type="function">
    <text>Actins are highly conserved proteins that are involved in various types of cell motility and are ubiquitously expressed in all eukaryotic cells.</text>
</comment>
<comment type="catalytic activity">
    <reaction evidence="2">
        <text>ATP + H2O = ADP + phosphate + H(+)</text>
        <dbReference type="Rhea" id="RHEA:13065"/>
        <dbReference type="ChEBI" id="CHEBI:15377"/>
        <dbReference type="ChEBI" id="CHEBI:15378"/>
        <dbReference type="ChEBI" id="CHEBI:30616"/>
        <dbReference type="ChEBI" id="CHEBI:43474"/>
        <dbReference type="ChEBI" id="CHEBI:456216"/>
    </reaction>
</comment>
<comment type="subcellular location">
    <subcellularLocation>
        <location>Cytoplasm</location>
        <location>Cytoskeleton</location>
    </subcellularLocation>
</comment>
<comment type="similarity">
    <text evidence="3">Belongs to the actin family.</text>
</comment>
<accession>P69003</accession>
<accession>P53462</accession>
<feature type="propeptide" id="PRO_0000000678" description="Removed in mature form" evidence="1">
    <location>
        <begin position="1"/>
        <end position="2"/>
    </location>
</feature>
<feature type="chain" id="PRO_0000000679" description="Actin CyI, cytoplasmic">
    <location>
        <begin position="3"/>
        <end position="376"/>
    </location>
</feature>
<feature type="modified residue" description="N-acetylaspartate" evidence="1">
    <location>
        <position position="3"/>
    </location>
</feature>
<organism>
    <name type="scientific">Heliocidaris tuberculata</name>
    <name type="common">Sea urchin</name>
    <dbReference type="NCBI Taxonomy" id="7635"/>
    <lineage>
        <taxon>Eukaryota</taxon>
        <taxon>Metazoa</taxon>
        <taxon>Echinodermata</taxon>
        <taxon>Eleutherozoa</taxon>
        <taxon>Echinozoa</taxon>
        <taxon>Echinoidea</taxon>
        <taxon>Euechinoidea</taxon>
        <taxon>Echinacea</taxon>
        <taxon>Camarodonta</taxon>
        <taxon>Echinidea</taxon>
        <taxon>Echinometridae</taxon>
        <taxon>Heliocidaris</taxon>
    </lineage>
</organism>
<name>ACT1_HELTB</name>
<keyword id="KW-0007">Acetylation</keyword>
<keyword id="KW-0067">ATP-binding</keyword>
<keyword id="KW-0963">Cytoplasm</keyword>
<keyword id="KW-0206">Cytoskeleton</keyword>
<keyword id="KW-0378">Hydrolase</keyword>
<keyword id="KW-0547">Nucleotide-binding</keyword>
<evidence type="ECO:0000250" key="1"/>
<evidence type="ECO:0000250" key="2">
    <source>
        <dbReference type="UniProtKB" id="P68137"/>
    </source>
</evidence>
<evidence type="ECO:0000305" key="3"/>
<proteinExistence type="inferred from homology"/>
<protein>
    <recommendedName>
        <fullName>Actin CyI, cytoplasmic</fullName>
        <ecNumber evidence="2">3.6.4.-</ecNumber>
    </recommendedName>
</protein>
<sequence>MCDDDVAALVIDNGSGMVKAGFAGDDAPRAVFPSIVGRPRHQGVMVGMGQKDSYVGDEAQSKRGILTLKYPIEHGIVTNWDDMEKIWHHTFYNELRVAPEEHPVLLTEAPLNPKANREKMTQIMFETFNSPAMYVAIQAVLSLYASGRTTGIVFDSGDGVSHTVPIYEGYALPHAILRLDLAGRDLTDYLMKILTERGYSFTTTAEREIVRDIKEKLCYVALDFEQEMSTAASSSSLEKSYELPDGQVITIGNERFRAPESLFQPSFLGMESAGIHETTYNSIMKCDVDIRKDLYANTVLSGGSTMFPGIADRMQKEITALAPPTMKIKIIAPPERKYSVWIGGSILASLSTFQQMWISKQEYDESGPSIVHRKCF</sequence>